<protein>
    <recommendedName>
        <fullName>LYR motif-containing protein At3g19508</fullName>
    </recommendedName>
</protein>
<feature type="chain" id="PRO_0000365721" description="LYR motif-containing protein At3g19508">
    <location>
        <begin position="1"/>
        <end position="81"/>
    </location>
</feature>
<feature type="sequence conflict" description="In Ref. 3; ABK28338." evidence="1" ref="3">
    <original>E</original>
    <variation>EG</variation>
    <location>
        <position position="81"/>
    </location>
</feature>
<organism>
    <name type="scientific">Arabidopsis thaliana</name>
    <name type="common">Mouse-ear cress</name>
    <dbReference type="NCBI Taxonomy" id="3702"/>
    <lineage>
        <taxon>Eukaryota</taxon>
        <taxon>Viridiplantae</taxon>
        <taxon>Streptophyta</taxon>
        <taxon>Embryophyta</taxon>
        <taxon>Tracheophyta</taxon>
        <taxon>Spermatophyta</taxon>
        <taxon>Magnoliopsida</taxon>
        <taxon>eudicotyledons</taxon>
        <taxon>Gunneridae</taxon>
        <taxon>Pentapetalae</taxon>
        <taxon>rosids</taxon>
        <taxon>malvids</taxon>
        <taxon>Brassicales</taxon>
        <taxon>Brassicaceae</taxon>
        <taxon>Camelineae</taxon>
        <taxon>Arabidopsis</taxon>
    </lineage>
</organism>
<dbReference type="EMBL" id="AB025624">
    <property type="status" value="NOT_ANNOTATED_CDS"/>
    <property type="molecule type" value="Genomic_DNA"/>
</dbReference>
<dbReference type="EMBL" id="CP002686">
    <property type="protein sequence ID" value="AEE76249.1"/>
    <property type="molecule type" value="Genomic_DNA"/>
</dbReference>
<dbReference type="EMBL" id="DQ487562">
    <property type="protein sequence ID" value="ABF59231.1"/>
    <property type="molecule type" value="mRNA"/>
</dbReference>
<dbReference type="EMBL" id="DQ652686">
    <property type="protein sequence ID" value="ABK28338.1"/>
    <property type="status" value="ALT_SEQ"/>
    <property type="molecule type" value="mRNA"/>
</dbReference>
<dbReference type="EMBL" id="AK228501">
    <property type="protein sequence ID" value="BAF00427.1"/>
    <property type="molecule type" value="mRNA"/>
</dbReference>
<dbReference type="RefSeq" id="NP_001078187.1">
    <property type="nucleotide sequence ID" value="NM_001084718.3"/>
</dbReference>
<dbReference type="SMR" id="Q1G3M2"/>
<dbReference type="FunCoup" id="Q1G3M2">
    <property type="interactions" value="167"/>
</dbReference>
<dbReference type="STRING" id="3702.Q1G3M2"/>
<dbReference type="iPTMnet" id="Q1G3M2"/>
<dbReference type="PaxDb" id="3702-AT3G19508.1"/>
<dbReference type="ProteomicsDB" id="238870"/>
<dbReference type="EnsemblPlants" id="AT3G19508.1">
    <property type="protein sequence ID" value="AT3G19508.1"/>
    <property type="gene ID" value="AT3G19508"/>
</dbReference>
<dbReference type="GeneID" id="5008013"/>
<dbReference type="Gramene" id="AT3G19508.1">
    <property type="protein sequence ID" value="AT3G19508.1"/>
    <property type="gene ID" value="AT3G19508"/>
</dbReference>
<dbReference type="KEGG" id="ath:AT3G19508"/>
<dbReference type="Araport" id="AT3G19508"/>
<dbReference type="TAIR" id="AT3G19508"/>
<dbReference type="eggNOG" id="ENOG502S44B">
    <property type="taxonomic scope" value="Eukaryota"/>
</dbReference>
<dbReference type="HOGENOM" id="CLU_191745_0_0_1"/>
<dbReference type="InParanoid" id="Q1G3M2"/>
<dbReference type="OMA" id="SLWVLHK"/>
<dbReference type="OrthoDB" id="190541at2759"/>
<dbReference type="PhylomeDB" id="Q1G3M2"/>
<dbReference type="PRO" id="PR:Q1G3M2"/>
<dbReference type="Proteomes" id="UP000006548">
    <property type="component" value="Chromosome 3"/>
</dbReference>
<dbReference type="ExpressionAtlas" id="Q1G3M2">
    <property type="expression patterns" value="baseline and differential"/>
</dbReference>
<dbReference type="GO" id="GO:0005829">
    <property type="term" value="C:cytosol"/>
    <property type="evidence" value="ECO:0007005"/>
    <property type="project" value="TAIR"/>
</dbReference>
<dbReference type="CDD" id="cd20269">
    <property type="entry name" value="Complex1_LYR_LYRM9"/>
    <property type="match status" value="1"/>
</dbReference>
<dbReference type="InterPro" id="IPR045291">
    <property type="entry name" value="Complex1_LYR_LYRM9"/>
</dbReference>
<dbReference type="PANTHER" id="PTHR36758">
    <property type="entry name" value="OS01G0342800 PROTEIN"/>
    <property type="match status" value="1"/>
</dbReference>
<dbReference type="PANTHER" id="PTHR36758:SF1">
    <property type="entry name" value="OS01G0342800 PROTEIN"/>
    <property type="match status" value="1"/>
</dbReference>
<sequence>MKKVLRVYGGVMRLVRLLPADSRPYYAKYARENFVNYREVDQSETSLDELFQRAYNHSLWVLKKYSIDESAATKLKEICFE</sequence>
<accession>Q1G3M2</accession>
<accession>A0MDS0</accession>
<gene>
    <name type="ordered locus">At3g19508</name>
    <name type="ORF">MLD14</name>
</gene>
<proteinExistence type="inferred from homology"/>
<comment type="similarity">
    <text evidence="1">Belongs to the complex I LYR family. LYRM9 subfamily.</text>
</comment>
<comment type="sequence caution" evidence="1">
    <conflict type="erroneous termination">
        <sequence resource="EMBL-CDS" id="ABK28338"/>
    </conflict>
    <text>Extended C-terminus.</text>
</comment>
<name>LYRM9_ARATH</name>
<keyword id="KW-1185">Reference proteome</keyword>
<reference key="1">
    <citation type="journal article" date="2000" name="DNA Res.">
        <title>Structural analysis of Arabidopsis thaliana chromosome 3. I. Sequence features of the regions of 4,504,864 bp covered by sixty P1 and TAC clones.</title>
        <authorList>
            <person name="Sato S."/>
            <person name="Nakamura Y."/>
            <person name="Kaneko T."/>
            <person name="Katoh T."/>
            <person name="Asamizu E."/>
            <person name="Tabata S."/>
        </authorList>
    </citation>
    <scope>NUCLEOTIDE SEQUENCE [LARGE SCALE GENOMIC DNA]</scope>
    <source>
        <strain>cv. Columbia</strain>
    </source>
</reference>
<reference key="2">
    <citation type="journal article" date="2017" name="Plant J.">
        <title>Araport11: a complete reannotation of the Arabidopsis thaliana reference genome.</title>
        <authorList>
            <person name="Cheng C.Y."/>
            <person name="Krishnakumar V."/>
            <person name="Chan A.P."/>
            <person name="Thibaud-Nissen F."/>
            <person name="Schobel S."/>
            <person name="Town C.D."/>
        </authorList>
    </citation>
    <scope>GENOME REANNOTATION</scope>
    <source>
        <strain>cv. Columbia</strain>
    </source>
</reference>
<reference key="3">
    <citation type="journal article" date="2006" name="Plant Biotechnol. J.">
        <title>Simultaneous high-throughput recombinational cloning of open reading frames in closed and open configurations.</title>
        <authorList>
            <person name="Underwood B.A."/>
            <person name="Vanderhaeghen R."/>
            <person name="Whitford R."/>
            <person name="Town C.D."/>
            <person name="Hilson P."/>
        </authorList>
    </citation>
    <scope>NUCLEOTIDE SEQUENCE [LARGE SCALE MRNA]</scope>
    <source>
        <strain>cv. Columbia</strain>
    </source>
</reference>
<reference key="4">
    <citation type="submission" date="2006-07" db="EMBL/GenBank/DDBJ databases">
        <title>Large-scale analysis of RIKEN Arabidopsis full-length (RAFL) cDNAs.</title>
        <authorList>
            <person name="Totoki Y."/>
            <person name="Seki M."/>
            <person name="Ishida J."/>
            <person name="Nakajima M."/>
            <person name="Enju A."/>
            <person name="Morosawa T."/>
            <person name="Kamiya A."/>
            <person name="Narusaka M."/>
            <person name="Shin-i T."/>
            <person name="Nakagawa M."/>
            <person name="Sakamoto N."/>
            <person name="Oishi K."/>
            <person name="Kohara Y."/>
            <person name="Kobayashi M."/>
            <person name="Toyoda A."/>
            <person name="Sakaki Y."/>
            <person name="Sakurai T."/>
            <person name="Iida K."/>
            <person name="Akiyama K."/>
            <person name="Satou M."/>
            <person name="Toyoda T."/>
            <person name="Konagaya A."/>
            <person name="Carninci P."/>
            <person name="Kawai J."/>
            <person name="Hayashizaki Y."/>
            <person name="Shinozaki K."/>
        </authorList>
    </citation>
    <scope>NUCLEOTIDE SEQUENCE [LARGE SCALE MRNA]</scope>
</reference>
<evidence type="ECO:0000305" key="1"/>